<reference key="1">
    <citation type="journal article" date="1998" name="Cell. Mol. Life Sci.">
        <title>In pre-sterol carrier protein 2 (SCP2) in solution the leader peptide 1-20 is flexibly disordered, and residues 21-143 adopt the same globular fold as in mature SCP2.</title>
        <authorList>
            <person name="Weber F.E."/>
            <person name="Dyer J.H."/>
            <person name="Lopez Garcia F."/>
            <person name="Werder M."/>
            <person name="Szyperski T."/>
            <person name="Wuethrich K."/>
            <person name="Hauser H."/>
        </authorList>
    </citation>
    <scope>NUCLEOTIDE SEQUENCE [MRNA] (ISOFORMS SCPX AND SCP2)</scope>
    <scope>FUNCTION</scope>
    <scope>STRUCTURE BY NMR OF 405-547</scope>
    <source>
        <tissue>Intestinal epithelium</tissue>
    </source>
</reference>
<reference key="2">
    <citation type="journal article" date="1999" name="Acta Crystallogr. D">
        <title>Crystallization and initial X-ray analysis of rabbit mature sterol carrier protein 2.</title>
        <authorList>
            <person name="Choinowski T."/>
            <person name="Dyer J.H."/>
            <person name="Maderegger B."/>
            <person name="Winterhalter K.H."/>
            <person name="Hauser H."/>
            <person name="Piontek K."/>
        </authorList>
    </citation>
    <scope>CRYSTALLIZATION</scope>
</reference>
<reference key="3">
    <citation type="journal article" date="2000" name="Biochemistry">
        <title>Structure of sterol carrier protein 2 at 1.8 A resolution reveals a hydrophobic tunnel suitable for lipid binding.</title>
        <authorList>
            <person name="Choinowski T."/>
            <person name="Hauser H."/>
            <person name="Piontek K."/>
        </authorList>
    </citation>
    <scope>X-RAY CRYSTALLOGRAPHY (1.8 ANGSTROMS) OF 425-547</scope>
    <scope>IDENTIFICATION BY MASS SPECTROMETRY</scope>
</reference>
<feature type="chain" id="PRO_0000034095" description="Sterol carrier protein 2">
    <location>
        <begin position="1"/>
        <end position="547"/>
    </location>
</feature>
<feature type="domain" description="SCP2">
    <location>
        <begin position="433"/>
        <end position="543"/>
    </location>
</feature>
<feature type="short sequence motif" description="Microbody targeting signal" evidence="4">
    <location>
        <begin position="545"/>
        <end position="547"/>
    </location>
</feature>
<feature type="modified residue" description="Phosphoserine" evidence="1">
    <location>
        <position position="3"/>
    </location>
</feature>
<feature type="modified residue" description="N6-acetyllysine" evidence="3">
    <location>
        <position position="7"/>
    </location>
</feature>
<feature type="modified residue" description="N6-succinyllysine" evidence="3">
    <location>
        <position position="40"/>
    </location>
</feature>
<feature type="modified residue" description="N6-acetyllysine; alternate" evidence="3">
    <location>
        <position position="132"/>
    </location>
</feature>
<feature type="modified residue" description="N6-succinyllysine; alternate" evidence="3">
    <location>
        <position position="132"/>
    </location>
</feature>
<feature type="modified residue" description="N6-succinyllysine" evidence="3">
    <location>
        <position position="168"/>
    </location>
</feature>
<feature type="modified residue" description="N6-acetyllysine" evidence="3">
    <location>
        <position position="173"/>
    </location>
</feature>
<feature type="modified residue" description="N6-acetyllysine" evidence="3">
    <location>
        <position position="177"/>
    </location>
</feature>
<feature type="modified residue" description="N6-acetyllysine; alternate" evidence="2">
    <location>
        <position position="183"/>
    </location>
</feature>
<feature type="modified residue" description="N6-succinyllysine; alternate" evidence="3">
    <location>
        <position position="183"/>
    </location>
</feature>
<feature type="modified residue" description="N6-succinyllysine" evidence="3">
    <location>
        <position position="282"/>
    </location>
</feature>
<feature type="modified residue" description="N6-acetyllysine; alternate" evidence="3">
    <location>
        <position position="341"/>
    </location>
</feature>
<feature type="modified residue" description="N6-succinyllysine; alternate" evidence="3">
    <location>
        <position position="341"/>
    </location>
</feature>
<feature type="modified residue" description="N6-acetyllysine; alternate" evidence="3">
    <location>
        <position position="432"/>
    </location>
</feature>
<feature type="modified residue" description="N6-succinyllysine; alternate" evidence="3">
    <location>
        <position position="432"/>
    </location>
</feature>
<feature type="modified residue" description="N6-acetyllysine; alternate" evidence="2">
    <location>
        <position position="438"/>
    </location>
</feature>
<feature type="modified residue" description="N6-succinyllysine; alternate" evidence="3">
    <location>
        <position position="438"/>
    </location>
</feature>
<feature type="modified residue" description="N6-acetyllysine; alternate" evidence="3">
    <location>
        <position position="443"/>
    </location>
</feature>
<feature type="modified residue" description="N6-succinyllysine; alternate" evidence="3">
    <location>
        <position position="443"/>
    </location>
</feature>
<feature type="modified residue" description="N6-acetyllysine; alternate" evidence="3">
    <location>
        <position position="453"/>
    </location>
</feature>
<feature type="modified residue" description="N6-succinyllysine; alternate" evidence="3">
    <location>
        <position position="453"/>
    </location>
</feature>
<feature type="modified residue" description="N6-succinyllysine" evidence="3">
    <location>
        <position position="464"/>
    </location>
</feature>
<feature type="modified residue" description="N6-acetyllysine; alternate" evidence="2">
    <location>
        <position position="470"/>
    </location>
</feature>
<feature type="modified residue" description="N6-succinyllysine; alternate" evidence="3">
    <location>
        <position position="470"/>
    </location>
</feature>
<feature type="modified residue" description="N6-succinyllysine" evidence="3">
    <location>
        <position position="479"/>
    </location>
</feature>
<feature type="modified residue" description="N6-acetyllysine" evidence="3">
    <location>
        <position position="491"/>
    </location>
</feature>
<feature type="modified residue" description="N6-succinyllysine" evidence="3">
    <location>
        <position position="492"/>
    </location>
</feature>
<feature type="modified residue" description="N6-succinyllysine" evidence="3">
    <location>
        <position position="511"/>
    </location>
</feature>
<feature type="modified residue" description="Phosphoserine" evidence="3">
    <location>
        <position position="516"/>
    </location>
</feature>
<feature type="modified residue" description="N6-succinyllysine" evidence="3">
    <location>
        <position position="522"/>
    </location>
</feature>
<feature type="modified residue" description="N6-succinyllysine" evidence="3">
    <location>
        <position position="534"/>
    </location>
</feature>
<feature type="modified residue" description="N6-succinyllysine" evidence="3">
    <location>
        <position position="544"/>
    </location>
</feature>
<feature type="splice variant" id="VSP_018896" description="In isoform SCP2." evidence="6">
    <location>
        <begin position="1"/>
        <end position="404"/>
    </location>
</feature>
<feature type="helix" evidence="9">
    <location>
        <begin position="432"/>
        <end position="454"/>
    </location>
</feature>
<feature type="strand" evidence="9">
    <location>
        <begin position="457"/>
        <end position="465"/>
    </location>
</feature>
<feature type="helix" evidence="9">
    <location>
        <begin position="467"/>
        <end position="469"/>
    </location>
</feature>
<feature type="strand" evidence="9">
    <location>
        <begin position="472"/>
        <end position="480"/>
    </location>
</feature>
<feature type="strand" evidence="9">
    <location>
        <begin position="484"/>
        <end position="487"/>
    </location>
</feature>
<feature type="strand" evidence="9">
    <location>
        <begin position="494"/>
        <end position="500"/>
    </location>
</feature>
<feature type="helix" evidence="9">
    <location>
        <begin position="501"/>
        <end position="508"/>
    </location>
</feature>
<feature type="helix" evidence="9">
    <location>
        <begin position="514"/>
        <end position="519"/>
    </location>
</feature>
<feature type="strand" evidence="9">
    <location>
        <begin position="524"/>
        <end position="527"/>
    </location>
</feature>
<feature type="helix" evidence="9">
    <location>
        <begin position="529"/>
        <end position="536"/>
    </location>
</feature>
<feature type="site" description="Cleavage" evidence="8">
    <location sequence="O62742-2">
        <begin position="20"/>
        <end position="21"/>
    </location>
</feature>
<gene>
    <name type="primary">SCP2</name>
</gene>
<accession>O62742</accession>
<proteinExistence type="evidence at protein level"/>
<dbReference type="EC" id="2.3.1.155" evidence="1"/>
<dbReference type="EC" id="2.3.1.176" evidence="1"/>
<dbReference type="EC" id="2.3.1.16" evidence="1"/>
<dbReference type="EMBL" id="AF051897">
    <property type="protein sequence ID" value="AAC15422.1"/>
    <property type="molecule type" value="mRNA"/>
</dbReference>
<dbReference type="RefSeq" id="NP_001075504.1">
    <molecule id="O62742-1"/>
    <property type="nucleotide sequence ID" value="NM_001082035.1"/>
</dbReference>
<dbReference type="PDB" id="1C44">
    <property type="method" value="X-ray"/>
    <property type="resolution" value="1.80 A"/>
    <property type="chains" value="A=425-547"/>
</dbReference>
<dbReference type="PDBsum" id="1C44"/>
<dbReference type="SMR" id="O62742"/>
<dbReference type="FunCoup" id="O62742">
    <property type="interactions" value="1527"/>
</dbReference>
<dbReference type="STRING" id="9986.ENSOCUP00000019823"/>
<dbReference type="PaxDb" id="9986-ENSOCUP00000019823"/>
<dbReference type="GeneID" id="100008683"/>
<dbReference type="KEGG" id="ocu:100008683"/>
<dbReference type="CTD" id="6342"/>
<dbReference type="eggNOG" id="KOG1406">
    <property type="taxonomic scope" value="Eukaryota"/>
</dbReference>
<dbReference type="eggNOG" id="KOG4170">
    <property type="taxonomic scope" value="Eukaryota"/>
</dbReference>
<dbReference type="InParanoid" id="O62742"/>
<dbReference type="OrthoDB" id="542135at2759"/>
<dbReference type="EvolutionaryTrace" id="O62742"/>
<dbReference type="Proteomes" id="UP000001811">
    <property type="component" value="Unplaced"/>
</dbReference>
<dbReference type="GO" id="GO:0005737">
    <property type="term" value="C:cytoplasm"/>
    <property type="evidence" value="ECO:0000250"/>
    <property type="project" value="UniProtKB"/>
</dbReference>
<dbReference type="GO" id="GO:0005783">
    <property type="term" value="C:endoplasmic reticulum"/>
    <property type="evidence" value="ECO:0000250"/>
    <property type="project" value="UniProtKB"/>
</dbReference>
<dbReference type="GO" id="GO:0005739">
    <property type="term" value="C:mitochondrion"/>
    <property type="evidence" value="ECO:0000250"/>
    <property type="project" value="UniProtKB"/>
</dbReference>
<dbReference type="GO" id="GO:0005782">
    <property type="term" value="C:peroxisomal matrix"/>
    <property type="evidence" value="ECO:0000250"/>
    <property type="project" value="UniProtKB"/>
</dbReference>
<dbReference type="GO" id="GO:0005777">
    <property type="term" value="C:peroxisome"/>
    <property type="evidence" value="ECO:0000250"/>
    <property type="project" value="UniProtKB"/>
</dbReference>
<dbReference type="GO" id="GO:0003988">
    <property type="term" value="F:acetyl-CoA C-acyltransferase activity"/>
    <property type="evidence" value="ECO:0000250"/>
    <property type="project" value="UniProtKB"/>
</dbReference>
<dbReference type="GO" id="GO:0050633">
    <property type="term" value="F:acetyl-CoA C-myristoyltransferase activity"/>
    <property type="evidence" value="ECO:0000250"/>
    <property type="project" value="UniProtKB"/>
</dbReference>
<dbReference type="GO" id="GO:0120020">
    <property type="term" value="F:cholesterol transfer activity"/>
    <property type="evidence" value="ECO:0000250"/>
    <property type="project" value="UniProtKB"/>
</dbReference>
<dbReference type="GO" id="GO:0008289">
    <property type="term" value="F:lipid binding"/>
    <property type="evidence" value="ECO:0007669"/>
    <property type="project" value="UniProtKB-KW"/>
</dbReference>
<dbReference type="GO" id="GO:0120019">
    <property type="term" value="F:phosphatidylcholine transfer activity"/>
    <property type="evidence" value="ECO:0000250"/>
    <property type="project" value="UniProtKB"/>
</dbReference>
<dbReference type="GO" id="GO:0033814">
    <property type="term" value="F:propanoyl-CoA C-acyltransferase activity"/>
    <property type="evidence" value="ECO:0007669"/>
    <property type="project" value="RHEA"/>
</dbReference>
<dbReference type="GO" id="GO:0050632">
    <property type="term" value="F:propionyl-CoA C2-trimethyltridecanoyltransferase activity"/>
    <property type="evidence" value="ECO:0000250"/>
    <property type="project" value="UniProtKB"/>
</dbReference>
<dbReference type="GO" id="GO:0008206">
    <property type="term" value="P:bile acid metabolic process"/>
    <property type="evidence" value="ECO:0000250"/>
    <property type="project" value="UniProtKB"/>
</dbReference>
<dbReference type="GO" id="GO:0006635">
    <property type="term" value="P:fatty acid beta-oxidation"/>
    <property type="evidence" value="ECO:0000250"/>
    <property type="project" value="UniProtKB"/>
</dbReference>
<dbReference type="GO" id="GO:0032367">
    <property type="term" value="P:intracellular cholesterol transport"/>
    <property type="evidence" value="ECO:0000250"/>
    <property type="project" value="UniProtKB"/>
</dbReference>
<dbReference type="GO" id="GO:0006869">
    <property type="term" value="P:lipid transport"/>
    <property type="evidence" value="ECO:0007669"/>
    <property type="project" value="UniProtKB-KW"/>
</dbReference>
<dbReference type="GO" id="GO:0071071">
    <property type="term" value="P:regulation of phospholipid biosynthetic process"/>
    <property type="evidence" value="ECO:0000250"/>
    <property type="project" value="UniProtKB"/>
</dbReference>
<dbReference type="CDD" id="cd00826">
    <property type="entry name" value="nondecarbox_cond_enzymes"/>
    <property type="match status" value="1"/>
</dbReference>
<dbReference type="FunFam" id="3.40.47.10:FF:000016">
    <property type="entry name" value="Non-specific lipid-transfer protein"/>
    <property type="match status" value="1"/>
</dbReference>
<dbReference type="FunFam" id="3.30.1050.10:FF:000001">
    <property type="entry name" value="Putative Non-specific lipid-transfer protein"/>
    <property type="match status" value="1"/>
</dbReference>
<dbReference type="Gene3D" id="3.40.47.10">
    <property type="match status" value="1"/>
</dbReference>
<dbReference type="Gene3D" id="3.30.1050.10">
    <property type="entry name" value="SCP2 sterol-binding domain"/>
    <property type="match status" value="1"/>
</dbReference>
<dbReference type="InterPro" id="IPR003033">
    <property type="entry name" value="SCP2_sterol-bd_dom"/>
</dbReference>
<dbReference type="InterPro" id="IPR036527">
    <property type="entry name" value="SCP2_sterol-bd_dom_sf"/>
</dbReference>
<dbReference type="InterPro" id="IPR016039">
    <property type="entry name" value="Thiolase-like"/>
</dbReference>
<dbReference type="InterPro" id="IPR020615">
    <property type="entry name" value="Thiolase_acyl_enz_int_AS"/>
</dbReference>
<dbReference type="InterPro" id="IPR055140">
    <property type="entry name" value="Thiolase_C_2"/>
</dbReference>
<dbReference type="InterPro" id="IPR020613">
    <property type="entry name" value="Thiolase_CS"/>
</dbReference>
<dbReference type="InterPro" id="IPR020616">
    <property type="entry name" value="Thiolase_N"/>
</dbReference>
<dbReference type="NCBIfam" id="NF006102">
    <property type="entry name" value="PRK08256.1"/>
    <property type="match status" value="1"/>
</dbReference>
<dbReference type="PANTHER" id="PTHR42870">
    <property type="entry name" value="ACETYL-COA C-ACETYLTRANSFERASE"/>
    <property type="match status" value="1"/>
</dbReference>
<dbReference type="PANTHER" id="PTHR42870:SF1">
    <property type="entry name" value="NON-SPECIFIC LIPID-TRANSFER PROTEIN-LIKE 2"/>
    <property type="match status" value="1"/>
</dbReference>
<dbReference type="Pfam" id="PF02036">
    <property type="entry name" value="SCP2"/>
    <property type="match status" value="1"/>
</dbReference>
<dbReference type="Pfam" id="PF22691">
    <property type="entry name" value="Thiolase_C_1"/>
    <property type="match status" value="1"/>
</dbReference>
<dbReference type="Pfam" id="PF00108">
    <property type="entry name" value="Thiolase_N"/>
    <property type="match status" value="1"/>
</dbReference>
<dbReference type="SUPFAM" id="SSF55718">
    <property type="entry name" value="SCP-like"/>
    <property type="match status" value="1"/>
</dbReference>
<dbReference type="SUPFAM" id="SSF53901">
    <property type="entry name" value="Thiolase-like"/>
    <property type="match status" value="2"/>
</dbReference>
<dbReference type="PROSITE" id="PS00098">
    <property type="entry name" value="THIOLASE_1"/>
    <property type="match status" value="1"/>
</dbReference>
<dbReference type="PROSITE" id="PS00737">
    <property type="entry name" value="THIOLASE_2"/>
    <property type="match status" value="1"/>
</dbReference>
<sequence length="547" mass="58904">MSSSARKLAPLPRVFVVGVGMTKFVKPGTEDARDYPDMAKEAGQKALADAQIPYSAVEQACIGYVYGDSTCGQRAVYHSLGLTGIPIINVNNNCSTGSTALFMGRQLIQGGMAECVLALGFEKMERGSLGAKFPDRTNPMDKHLDVLINKYGLSAHPVAPQMFGSAGKEHMEKYGTKIEHFAKIGWKNHKHSVNNPYSQFQKEYSLDEVMSSRPIFDFLTVLQCCPTSDGAAAAILASEEFVKKYGLQSKAVEILAQEMVTDFPSSFEEKSIIKMVGFDMSKEAARRCYEKSGLRPSDIDVIELHDCFSANELLTYEALGLCPEGKGGALVDRGDNTYGGKWVINPSGGLISKGHPLGATGLAQCAELCWQLRGEAGKRQVPGAKVALQHNLGLGGAAVVTLYKMGFPEAASSFRTHQIEAAPTSSAGDGFKANLVFKEIEKKLEEEGEQFVKKIGGIFAFKVKDGPGGKEATWVVDVKNGKGSVLPNSDKKADCTITIADSDLLALMTGKMNPQSAFFQGKLKITGNMGLAMKLQNLQLQPGKAKL</sequence>
<keyword id="KW-0002">3D-structure</keyword>
<keyword id="KW-0007">Acetylation</keyword>
<keyword id="KW-0012">Acyltransferase</keyword>
<keyword id="KW-0024">Alternative initiation</keyword>
<keyword id="KW-0963">Cytoplasm</keyword>
<keyword id="KW-0256">Endoplasmic reticulum</keyword>
<keyword id="KW-0443">Lipid metabolism</keyword>
<keyword id="KW-0445">Lipid transport</keyword>
<keyword id="KW-0446">Lipid-binding</keyword>
<keyword id="KW-0496">Mitochondrion</keyword>
<keyword id="KW-0576">Peroxisome</keyword>
<keyword id="KW-0597">Phosphoprotein</keyword>
<keyword id="KW-1185">Reference proteome</keyword>
<keyword id="KW-0808">Transferase</keyword>
<keyword id="KW-0813">Transport</keyword>
<evidence type="ECO:0000250" key="1">
    <source>
        <dbReference type="UniProtKB" id="P11915"/>
    </source>
</evidence>
<evidence type="ECO:0000250" key="2">
    <source>
        <dbReference type="UniProtKB" id="P22307"/>
    </source>
</evidence>
<evidence type="ECO:0000250" key="3">
    <source>
        <dbReference type="UniProtKB" id="P32020"/>
    </source>
</evidence>
<evidence type="ECO:0000255" key="4"/>
<evidence type="ECO:0000269" key="5">
    <source>
    </source>
</evidence>
<evidence type="ECO:0000303" key="6">
    <source>
    </source>
</evidence>
<evidence type="ECO:0000305" key="7"/>
<evidence type="ECO:0000305" key="8">
    <source>
    </source>
</evidence>
<evidence type="ECO:0007829" key="9">
    <source>
        <dbReference type="PDB" id="1C44"/>
    </source>
</evidence>
<name>SCP2_RABIT</name>
<organism>
    <name type="scientific">Oryctolagus cuniculus</name>
    <name type="common">Rabbit</name>
    <dbReference type="NCBI Taxonomy" id="9986"/>
    <lineage>
        <taxon>Eukaryota</taxon>
        <taxon>Metazoa</taxon>
        <taxon>Chordata</taxon>
        <taxon>Craniata</taxon>
        <taxon>Vertebrata</taxon>
        <taxon>Euteleostomi</taxon>
        <taxon>Mammalia</taxon>
        <taxon>Eutheria</taxon>
        <taxon>Euarchontoglires</taxon>
        <taxon>Glires</taxon>
        <taxon>Lagomorpha</taxon>
        <taxon>Leporidae</taxon>
        <taxon>Oryctolagus</taxon>
    </lineage>
</organism>
<comment type="function">
    <molecule>Isoform SCPx</molecule>
    <text evidence="1 2 3">Plays a crucial role in the peroxisomal oxidation of branched-chain fatty acids. Catalyzes the last step of the peroxisomal beta-oxidation of branched chain fatty acids and the side chain of the bile acid intermediates di- and trihydroxycoprostanic acids (DHCA and THCA) (By similarity). Also active with medium and long straight chain 3-oxoacyl-CoAs. Stimulates the microsomal conversion of 7-dehydrocholesterol to cholesterol and transfers phosphatidylcholine and 7-dehydrocholesterol between membrances, in vitro (By similarity). Isoforms SCP2 and SCPx cooperate in peroxisomal oxidation of certain naturally occurring tetramethyl-branched fatty acyl-CoAs (By similarity).</text>
</comment>
<comment type="function">
    <molecule>Isoform SCP2</molecule>
    <text evidence="1 2 3 5">Mediates the transfer of all common phospholipids, cholesterol and gangliosides from the endoplasmic reticulum to the plasma membrane (PubMed:9711242). May play a role in regulating steroidogenesis (By similarity). Stimulates the microsomal conversion of 7-dehydrocholesterol to cholesterol (By similarity). Also binds fatty acids and fatty acyl Coenzyme A (CoA) such as phytanoyl-CoA. Involved in the regulation phospholipid synthesis in endoplasmic reticulum enhancing the incorporation of exogenous fatty acid into glycerides. Seems to stimulate the rate-limiting step in phosphatidic acid formation mediated by GPAT3. Isoforms SCP2 and SCPx cooperate in peroxisomal oxidation of certain naturally occurring tetramethyl-branched fatty acyl-CoAs (By similarity).</text>
</comment>
<comment type="catalytic activity">
    <molecule>Isoform SCPx</molecule>
    <reaction evidence="2">
        <text>choloyl-CoA + propanoyl-CoA = 3alpha,7alpha,12alpha-trihydroxy-24-oxo-5beta-cholestan-26-oyl-CoA + CoA</text>
        <dbReference type="Rhea" id="RHEA:16865"/>
        <dbReference type="ChEBI" id="CHEBI:57287"/>
        <dbReference type="ChEBI" id="CHEBI:57373"/>
        <dbReference type="ChEBI" id="CHEBI:57392"/>
        <dbReference type="ChEBI" id="CHEBI:58507"/>
        <dbReference type="EC" id="2.3.1.176"/>
    </reaction>
    <physiologicalReaction direction="right-to-left" evidence="2">
        <dbReference type="Rhea" id="RHEA:16867"/>
    </physiologicalReaction>
</comment>
<comment type="catalytic activity">
    <molecule>Isoform SCPx</molecule>
    <reaction evidence="1">
        <text>an acyl-CoA + acetyl-CoA = a 3-oxoacyl-CoA + CoA</text>
        <dbReference type="Rhea" id="RHEA:21564"/>
        <dbReference type="ChEBI" id="CHEBI:57287"/>
        <dbReference type="ChEBI" id="CHEBI:57288"/>
        <dbReference type="ChEBI" id="CHEBI:58342"/>
        <dbReference type="ChEBI" id="CHEBI:90726"/>
        <dbReference type="EC" id="2.3.1.16"/>
    </reaction>
    <physiologicalReaction direction="right-to-left" evidence="1">
        <dbReference type="Rhea" id="RHEA:21566"/>
    </physiologicalReaction>
</comment>
<comment type="catalytic activity">
    <molecule>Isoform SCPx</molecule>
    <reaction evidence="1">
        <text>hexanoyl-CoA + acetyl-CoA = 3-oxooctanoyl-CoA + CoA</text>
        <dbReference type="Rhea" id="RHEA:31203"/>
        <dbReference type="ChEBI" id="CHEBI:57287"/>
        <dbReference type="ChEBI" id="CHEBI:57288"/>
        <dbReference type="ChEBI" id="CHEBI:62619"/>
        <dbReference type="ChEBI" id="CHEBI:62620"/>
    </reaction>
    <physiologicalReaction direction="right-to-left" evidence="1">
        <dbReference type="Rhea" id="RHEA:31205"/>
    </physiologicalReaction>
</comment>
<comment type="catalytic activity">
    <molecule>Isoform SCPx</molecule>
    <reaction evidence="1">
        <text>tetradecanoyl-CoA + acetyl-CoA = 3-oxohexadecanoyl-CoA + CoA</text>
        <dbReference type="Rhea" id="RHEA:18161"/>
        <dbReference type="ChEBI" id="CHEBI:57287"/>
        <dbReference type="ChEBI" id="CHEBI:57288"/>
        <dbReference type="ChEBI" id="CHEBI:57349"/>
        <dbReference type="ChEBI" id="CHEBI:57385"/>
        <dbReference type="EC" id="2.3.1.155"/>
    </reaction>
    <physiologicalReaction direction="right-to-left" evidence="1">
        <dbReference type="Rhea" id="RHEA:18163"/>
    </physiologicalReaction>
</comment>
<comment type="catalytic activity">
    <molecule>Isoform SCPx</molecule>
    <reaction evidence="1">
        <text>3-oxohexadecanedioyl-CoA + CoA = tetradecanedioyl-CoA + acetyl-CoA</text>
        <dbReference type="Rhea" id="RHEA:40343"/>
        <dbReference type="ChEBI" id="CHEBI:57287"/>
        <dbReference type="ChEBI" id="CHEBI:57288"/>
        <dbReference type="ChEBI" id="CHEBI:77081"/>
        <dbReference type="ChEBI" id="CHEBI:77084"/>
    </reaction>
    <physiologicalReaction direction="left-to-right" evidence="1">
        <dbReference type="Rhea" id="RHEA:40344"/>
    </physiologicalReaction>
</comment>
<comment type="catalytic activity">
    <molecule>Isoform SCPx</molecule>
    <reaction evidence="1">
        <text>propanoyl-CoA + tetradecanoyl-CoA = 3-oxo-2-methylhexadecanoyl-CoA + CoA</text>
        <dbReference type="Rhea" id="RHEA:46344"/>
        <dbReference type="ChEBI" id="CHEBI:57287"/>
        <dbReference type="ChEBI" id="CHEBI:57385"/>
        <dbReference type="ChEBI" id="CHEBI:57392"/>
        <dbReference type="ChEBI" id="CHEBI:86042"/>
    </reaction>
    <physiologicalReaction direction="right-to-left" evidence="1">
        <dbReference type="Rhea" id="RHEA:46346"/>
    </physiologicalReaction>
</comment>
<comment type="catalytic activity">
    <molecule>Isoform SCPx</molecule>
    <reaction evidence="1">
        <text>butanoyl-CoA + acetyl-CoA = 3-oxohexanoyl-CoA + CoA</text>
        <dbReference type="Rhea" id="RHEA:31111"/>
        <dbReference type="ChEBI" id="CHEBI:57287"/>
        <dbReference type="ChEBI" id="CHEBI:57288"/>
        <dbReference type="ChEBI" id="CHEBI:57371"/>
        <dbReference type="ChEBI" id="CHEBI:62418"/>
    </reaction>
    <physiologicalReaction direction="right-to-left" evidence="1">
        <dbReference type="Rhea" id="RHEA:31113"/>
    </physiologicalReaction>
</comment>
<comment type="catalytic activity">
    <molecule>Isoform SCPx</molecule>
    <reaction evidence="1">
        <text>octanoyl-CoA + acetyl-CoA = 3-oxodecanoyl-CoA + CoA</text>
        <dbReference type="Rhea" id="RHEA:31087"/>
        <dbReference type="ChEBI" id="CHEBI:57287"/>
        <dbReference type="ChEBI" id="CHEBI:57288"/>
        <dbReference type="ChEBI" id="CHEBI:57386"/>
        <dbReference type="ChEBI" id="CHEBI:62548"/>
    </reaction>
    <physiologicalReaction direction="right-to-left" evidence="1">
        <dbReference type="Rhea" id="RHEA:31089"/>
    </physiologicalReaction>
</comment>
<comment type="catalytic activity">
    <molecule>Isoform SCPx</molecule>
    <reaction evidence="1">
        <text>decanoyl-CoA + acetyl-CoA = 3-oxododecanoyl-CoA + CoA</text>
        <dbReference type="Rhea" id="RHEA:31183"/>
        <dbReference type="ChEBI" id="CHEBI:57287"/>
        <dbReference type="ChEBI" id="CHEBI:57288"/>
        <dbReference type="ChEBI" id="CHEBI:61430"/>
        <dbReference type="ChEBI" id="CHEBI:62615"/>
    </reaction>
    <physiologicalReaction direction="right-to-left" evidence="1">
        <dbReference type="Rhea" id="RHEA:31185"/>
    </physiologicalReaction>
</comment>
<comment type="catalytic activity">
    <molecule>Isoform SCPx</molecule>
    <reaction evidence="1">
        <text>dodecanoyl-CoA + acetyl-CoA = 3-oxotetradecanoyl-CoA + CoA</text>
        <dbReference type="Rhea" id="RHEA:31091"/>
        <dbReference type="ChEBI" id="CHEBI:57287"/>
        <dbReference type="ChEBI" id="CHEBI:57288"/>
        <dbReference type="ChEBI" id="CHEBI:57375"/>
        <dbReference type="ChEBI" id="CHEBI:62543"/>
    </reaction>
    <physiologicalReaction direction="right-to-left" evidence="1">
        <dbReference type="Rhea" id="RHEA:31093"/>
    </physiologicalReaction>
</comment>
<comment type="catalytic activity">
    <molecule>Isoform SCPx</molecule>
    <reaction evidence="1">
        <text>hexadecanoyl-CoA + acetyl-CoA = 3-oxooctadecanoyl-CoA + CoA</text>
        <dbReference type="Rhea" id="RHEA:35279"/>
        <dbReference type="ChEBI" id="CHEBI:57287"/>
        <dbReference type="ChEBI" id="CHEBI:57288"/>
        <dbReference type="ChEBI" id="CHEBI:57379"/>
        <dbReference type="ChEBI" id="CHEBI:71407"/>
    </reaction>
    <physiologicalReaction direction="right-to-left" evidence="1">
        <dbReference type="Rhea" id="RHEA:35281"/>
    </physiologicalReaction>
</comment>
<comment type="catalytic activity">
    <molecule>Isoform SCPx</molecule>
    <reaction evidence="1">
        <text>3-oxo-(9Z-octadecenoyl)-CoA + CoA = (7Z)-hexadecenoyl-CoA + acetyl-CoA</text>
        <dbReference type="Rhea" id="RHEA:47400"/>
        <dbReference type="ChEBI" id="CHEBI:57287"/>
        <dbReference type="ChEBI" id="CHEBI:57288"/>
        <dbReference type="ChEBI" id="CHEBI:87695"/>
        <dbReference type="ChEBI" id="CHEBI:87698"/>
    </reaction>
    <physiologicalReaction direction="left-to-right" evidence="1">
        <dbReference type="Rhea" id="RHEA:47401"/>
    </physiologicalReaction>
</comment>
<comment type="catalytic activity">
    <molecule>Isoform SCPx</molecule>
    <reaction evidence="1">
        <text>7-dehydrocholesterol(in) = 7-dehydrocholesterol(out)</text>
        <dbReference type="Rhea" id="RHEA:62960"/>
        <dbReference type="ChEBI" id="CHEBI:17759"/>
    </reaction>
</comment>
<comment type="catalytic activity">
    <molecule>Isoform SCP2</molecule>
    <reaction evidence="8">
        <text>7-dehydrocholesterol(in) = 7-dehydrocholesterol(out)</text>
        <dbReference type="Rhea" id="RHEA:62960"/>
        <dbReference type="ChEBI" id="CHEBI:17759"/>
    </reaction>
</comment>
<comment type="catalytic activity">
    <molecule>Isoform SCPx</molecule>
    <reaction evidence="1">
        <text>4,8,12-trimethyltridecanoyl-CoA + propanoyl-CoA = 3-oxopristanoyl-CoA + CoA</text>
        <dbReference type="Rhea" id="RHEA:10408"/>
        <dbReference type="ChEBI" id="CHEBI:57287"/>
        <dbReference type="ChEBI" id="CHEBI:57291"/>
        <dbReference type="ChEBI" id="CHEBI:57351"/>
        <dbReference type="ChEBI" id="CHEBI:57392"/>
        <dbReference type="EC" id="2.3.1.176"/>
    </reaction>
    <physiologicalReaction direction="right-to-left" evidence="1">
        <dbReference type="Rhea" id="RHEA:10410"/>
    </physiologicalReaction>
</comment>
<comment type="subunit">
    <molecule>Isoform SCPx</molecule>
    <text evidence="2">Interacts with PEX5; the interaction is essential for peroxisomal import.</text>
</comment>
<comment type="subcellular location">
    <molecule>Isoform SCP2</molecule>
    <subcellularLocation>
        <location evidence="3">Peroxisome</location>
    </subcellularLocation>
    <subcellularLocation>
        <location evidence="2">Cytoplasm</location>
    </subcellularLocation>
    <subcellularLocation>
        <location evidence="2">Mitochondrion</location>
    </subcellularLocation>
    <subcellularLocation>
        <location evidence="3">Endoplasmic reticulum</location>
    </subcellularLocation>
    <subcellularLocation>
        <location evidence="3">Mitochondrion</location>
    </subcellularLocation>
</comment>
<comment type="subcellular location">
    <molecule>Isoform SCPx</molecule>
    <subcellularLocation>
        <location evidence="1">Peroxisome</location>
    </subcellularLocation>
</comment>
<comment type="alternative products">
    <event type="alternative initiation"/>
    <isoform>
        <id>O62742-1</id>
        <name>SCPx</name>
        <sequence type="displayed"/>
    </isoform>
    <isoform>
        <id>O62742-2</id>
        <name>SCP2</name>
        <sequence type="described" ref="VSP_018896"/>
    </isoform>
</comment>
<comment type="PTM">
    <molecule>Isoform SCP2</molecule>
    <text evidence="5">preSCP2, a protein with a molecular mass of about 15 kDa, is processed into its mature form (SCP2) by proteolytic cleavage of a 20 residue leader sequence after translocation into peroxisomes.</text>
</comment>
<comment type="miscellaneous">
    <molecule>Isoform SCP2</molecule>
    <text evidence="7">Contains a putative mitochondrial transit peptide at positions 1-20.</text>
</comment>
<comment type="similarity">
    <text evidence="7">In the N-terminal section; belongs to the thiolase-like superfamily. Thiolase family.</text>
</comment>
<protein>
    <recommendedName>
        <fullName>Sterol carrier protein 2</fullName>
        <shortName>SCP-2</shortName>
    </recommendedName>
    <alternativeName>
        <fullName>Acetyl-CoA C-myristoyltransferase</fullName>
        <ecNumber evidence="1">2.3.1.155</ecNumber>
    </alternativeName>
    <alternativeName>
        <fullName>Non-specific lipid-transfer protein</fullName>
        <shortName>NSL-TP</shortName>
    </alternativeName>
    <alternativeName>
        <fullName>Propanoyl-CoA C-acyltransferase</fullName>
        <ecNumber evidence="1">2.3.1.176</ecNumber>
    </alternativeName>
    <alternativeName>
        <fullName>SCP-2/3-oxoacyl-CoA thiolase</fullName>
    </alternativeName>
    <alternativeName>
        <fullName>SCP-2/thiolase</fullName>
        <ecNumber evidence="1">2.3.1.16</ecNumber>
    </alternativeName>
    <alternativeName>
        <fullName>SCP-chi</fullName>
    </alternativeName>
    <alternativeName>
        <fullName>SCPX</fullName>
    </alternativeName>
    <alternativeName>
        <fullName>Sterol carrier protein X</fullName>
        <shortName>SCP-X</shortName>
    </alternativeName>
</protein>